<proteinExistence type="inferred from homology"/>
<reference key="1">
    <citation type="journal article" date="2007" name="PLoS ONE">
        <title>Genome sequencing shows that European isolates of Francisella tularensis subspecies tularensis are almost identical to US laboratory strain Schu S4.</title>
        <authorList>
            <person name="Chaudhuri R.R."/>
            <person name="Ren C.-P."/>
            <person name="Desmond L."/>
            <person name="Vincent G.A."/>
            <person name="Silman N.J."/>
            <person name="Brehm J.K."/>
            <person name="Elmore M.J."/>
            <person name="Hudson M.J."/>
            <person name="Forsman M."/>
            <person name="Isherwood K.E."/>
            <person name="Gurycova D."/>
            <person name="Minton N.P."/>
            <person name="Titball R.W."/>
            <person name="Pallen M.J."/>
            <person name="Vipond R."/>
        </authorList>
    </citation>
    <scope>NUCLEOTIDE SEQUENCE [LARGE SCALE GENOMIC DNA]</scope>
    <source>
        <strain>FSC 198</strain>
    </source>
</reference>
<comment type="function">
    <text evidence="1">Catalyzes the reversible conversion of ribose-5-phosphate to ribulose 5-phosphate.</text>
</comment>
<comment type="catalytic activity">
    <reaction evidence="1">
        <text>aldehydo-D-ribose 5-phosphate = D-ribulose 5-phosphate</text>
        <dbReference type="Rhea" id="RHEA:14657"/>
        <dbReference type="ChEBI" id="CHEBI:58121"/>
        <dbReference type="ChEBI" id="CHEBI:58273"/>
        <dbReference type="EC" id="5.3.1.6"/>
    </reaction>
</comment>
<comment type="pathway">
    <text evidence="1">Carbohydrate degradation; pentose phosphate pathway; D-ribose 5-phosphate from D-ribulose 5-phosphate (non-oxidative stage): step 1/1.</text>
</comment>
<comment type="subunit">
    <text evidence="1">Homodimer.</text>
</comment>
<comment type="similarity">
    <text evidence="1">Belongs to the ribose 5-phosphate isomerase family.</text>
</comment>
<evidence type="ECO:0000255" key="1">
    <source>
        <dbReference type="HAMAP-Rule" id="MF_00170"/>
    </source>
</evidence>
<sequence>MFFNKKNNQDELKKLAATEAAKSITTEITLGVGTGSTVGFLIEELVNYRDKIKTVVSSSEDSTRKLKALGFDVVDLNYAGEIDLYIDGADECNNHKELIKGGGAALTREKICVAAAKKFICIIDESKKVNTLGNFPLPIEVIPMARSYIARQIVKLGGQPVYREQTITDNGNVILDVYNLKIDNPLKLETELNQITGVVTNGIFALKPADTVIMATKDSNIVVL</sequence>
<protein>
    <recommendedName>
        <fullName evidence="1">Ribose-5-phosphate isomerase A</fullName>
        <ecNumber evidence="1">5.3.1.6</ecNumber>
    </recommendedName>
    <alternativeName>
        <fullName evidence="1">Phosphoriboisomerase A</fullName>
        <shortName evidence="1">PRI</shortName>
    </alternativeName>
</protein>
<gene>
    <name evidence="1" type="primary">rpiA</name>
    <name type="ordered locus">FTF1208</name>
</gene>
<keyword id="KW-0413">Isomerase</keyword>
<accession>Q14H27</accession>
<name>RPIA_FRAT1</name>
<organism>
    <name type="scientific">Francisella tularensis subsp. tularensis (strain FSC 198)</name>
    <dbReference type="NCBI Taxonomy" id="393115"/>
    <lineage>
        <taxon>Bacteria</taxon>
        <taxon>Pseudomonadati</taxon>
        <taxon>Pseudomonadota</taxon>
        <taxon>Gammaproteobacteria</taxon>
        <taxon>Thiotrichales</taxon>
        <taxon>Francisellaceae</taxon>
        <taxon>Francisella</taxon>
    </lineage>
</organism>
<feature type="chain" id="PRO_1000016922" description="Ribose-5-phosphate isomerase A">
    <location>
        <begin position="1"/>
        <end position="224"/>
    </location>
</feature>
<feature type="active site" description="Proton acceptor" evidence="1">
    <location>
        <position position="109"/>
    </location>
</feature>
<feature type="binding site" evidence="1">
    <location>
        <begin position="34"/>
        <end position="37"/>
    </location>
    <ligand>
        <name>substrate</name>
    </ligand>
</feature>
<feature type="binding site" evidence="1">
    <location>
        <begin position="87"/>
        <end position="90"/>
    </location>
    <ligand>
        <name>substrate</name>
    </ligand>
</feature>
<feature type="binding site" evidence="1">
    <location>
        <begin position="100"/>
        <end position="103"/>
    </location>
    <ligand>
        <name>substrate</name>
    </ligand>
</feature>
<feature type="binding site" evidence="1">
    <location>
        <position position="127"/>
    </location>
    <ligand>
        <name>substrate</name>
    </ligand>
</feature>
<dbReference type="EC" id="5.3.1.6" evidence="1"/>
<dbReference type="EMBL" id="AM286280">
    <property type="protein sequence ID" value="CAL09224.1"/>
    <property type="molecule type" value="Genomic_DNA"/>
</dbReference>
<dbReference type="RefSeq" id="WP_003015241.1">
    <property type="nucleotide sequence ID" value="NC_008245.1"/>
</dbReference>
<dbReference type="SMR" id="Q14H27"/>
<dbReference type="KEGG" id="ftf:FTF1208"/>
<dbReference type="HOGENOM" id="CLU_056590_1_1_6"/>
<dbReference type="UniPathway" id="UPA00115">
    <property type="reaction ID" value="UER00412"/>
</dbReference>
<dbReference type="GO" id="GO:0005829">
    <property type="term" value="C:cytosol"/>
    <property type="evidence" value="ECO:0007669"/>
    <property type="project" value="TreeGrafter"/>
</dbReference>
<dbReference type="GO" id="GO:0004751">
    <property type="term" value="F:ribose-5-phosphate isomerase activity"/>
    <property type="evidence" value="ECO:0007669"/>
    <property type="project" value="UniProtKB-UniRule"/>
</dbReference>
<dbReference type="GO" id="GO:0006014">
    <property type="term" value="P:D-ribose metabolic process"/>
    <property type="evidence" value="ECO:0007669"/>
    <property type="project" value="TreeGrafter"/>
</dbReference>
<dbReference type="GO" id="GO:0009052">
    <property type="term" value="P:pentose-phosphate shunt, non-oxidative branch"/>
    <property type="evidence" value="ECO:0007669"/>
    <property type="project" value="UniProtKB-UniRule"/>
</dbReference>
<dbReference type="CDD" id="cd01398">
    <property type="entry name" value="RPI_A"/>
    <property type="match status" value="1"/>
</dbReference>
<dbReference type="FunFam" id="3.30.70.260:FF:000004">
    <property type="entry name" value="Ribose-5-phosphate isomerase A"/>
    <property type="match status" value="1"/>
</dbReference>
<dbReference type="FunFam" id="3.40.50.1360:FF:000001">
    <property type="entry name" value="Ribose-5-phosphate isomerase A"/>
    <property type="match status" value="1"/>
</dbReference>
<dbReference type="Gene3D" id="3.30.70.260">
    <property type="match status" value="1"/>
</dbReference>
<dbReference type="Gene3D" id="3.40.50.1360">
    <property type="match status" value="1"/>
</dbReference>
<dbReference type="HAMAP" id="MF_00170">
    <property type="entry name" value="Rib_5P_isom_A"/>
    <property type="match status" value="1"/>
</dbReference>
<dbReference type="InterPro" id="IPR037171">
    <property type="entry name" value="NagB/RpiA_transferase-like"/>
</dbReference>
<dbReference type="InterPro" id="IPR020672">
    <property type="entry name" value="Ribose5P_isomerase_typA_subgr"/>
</dbReference>
<dbReference type="InterPro" id="IPR004788">
    <property type="entry name" value="Ribose5P_isomerase_type_A"/>
</dbReference>
<dbReference type="NCBIfam" id="NF001924">
    <property type="entry name" value="PRK00702.1"/>
    <property type="match status" value="1"/>
</dbReference>
<dbReference type="NCBIfam" id="TIGR00021">
    <property type="entry name" value="rpiA"/>
    <property type="match status" value="1"/>
</dbReference>
<dbReference type="PANTHER" id="PTHR11934">
    <property type="entry name" value="RIBOSE-5-PHOSPHATE ISOMERASE"/>
    <property type="match status" value="1"/>
</dbReference>
<dbReference type="PANTHER" id="PTHR11934:SF0">
    <property type="entry name" value="RIBOSE-5-PHOSPHATE ISOMERASE"/>
    <property type="match status" value="1"/>
</dbReference>
<dbReference type="Pfam" id="PF06026">
    <property type="entry name" value="Rib_5-P_isom_A"/>
    <property type="match status" value="1"/>
</dbReference>
<dbReference type="SUPFAM" id="SSF75445">
    <property type="entry name" value="D-ribose-5-phosphate isomerase (RpiA), lid domain"/>
    <property type="match status" value="1"/>
</dbReference>
<dbReference type="SUPFAM" id="SSF100950">
    <property type="entry name" value="NagB/RpiA/CoA transferase-like"/>
    <property type="match status" value="1"/>
</dbReference>